<reference key="1">
    <citation type="journal article" date="1989" name="Gene">
        <title>The genomic nucleotide sequences of two differentially expressed actin-coding genes from the sea star Pisaster ochraceus.</title>
        <authorList>
            <person name="Kowbel D.J."/>
            <person name="Smith M.J."/>
        </authorList>
    </citation>
    <scope>NUCLEOTIDE SEQUENCE [GENOMIC DNA]</scope>
</reference>
<keyword id="KW-0007">Acetylation</keyword>
<keyword id="KW-0067">ATP-binding</keyword>
<keyword id="KW-0963">Cytoplasm</keyword>
<keyword id="KW-0206">Cytoskeleton</keyword>
<keyword id="KW-0378">Hydrolase</keyword>
<keyword id="KW-0514">Muscle protein</keyword>
<keyword id="KW-0547">Nucleotide-binding</keyword>
<dbReference type="EC" id="3.6.4.-" evidence="2"/>
<dbReference type="EMBL" id="M26500">
    <property type="protein sequence ID" value="AAA29787.1"/>
    <property type="molecule type" value="Genomic_DNA"/>
</dbReference>
<dbReference type="PIR" id="JS0190">
    <property type="entry name" value="JS0190"/>
</dbReference>
<dbReference type="SMR" id="P12717"/>
<dbReference type="GO" id="GO:0005737">
    <property type="term" value="C:cytoplasm"/>
    <property type="evidence" value="ECO:0007669"/>
    <property type="project" value="UniProtKB-KW"/>
</dbReference>
<dbReference type="GO" id="GO:0005856">
    <property type="term" value="C:cytoskeleton"/>
    <property type="evidence" value="ECO:0007669"/>
    <property type="project" value="UniProtKB-SubCell"/>
</dbReference>
<dbReference type="GO" id="GO:0005524">
    <property type="term" value="F:ATP binding"/>
    <property type="evidence" value="ECO:0007669"/>
    <property type="project" value="UniProtKB-KW"/>
</dbReference>
<dbReference type="GO" id="GO:0016787">
    <property type="term" value="F:hydrolase activity"/>
    <property type="evidence" value="ECO:0007669"/>
    <property type="project" value="UniProtKB-KW"/>
</dbReference>
<dbReference type="CDD" id="cd10224">
    <property type="entry name" value="ASKHA_NBD_actin"/>
    <property type="match status" value="1"/>
</dbReference>
<dbReference type="FunFam" id="2.30.36.70:FF:000001">
    <property type="entry name" value="Actin, alpha skeletal muscle"/>
    <property type="match status" value="1"/>
</dbReference>
<dbReference type="FunFam" id="3.30.420.40:FF:000131">
    <property type="entry name" value="Actin, alpha skeletal muscle"/>
    <property type="match status" value="1"/>
</dbReference>
<dbReference type="FunFam" id="3.30.420.40:FF:000291">
    <property type="entry name" value="Actin, alpha skeletal muscle"/>
    <property type="match status" value="1"/>
</dbReference>
<dbReference type="FunFam" id="3.90.640.10:FF:000047">
    <property type="entry name" value="Actin, alpha skeletal muscle"/>
    <property type="match status" value="1"/>
</dbReference>
<dbReference type="FunFam" id="3.30.420.40:FF:000058">
    <property type="entry name" value="Putative actin-related protein 5"/>
    <property type="match status" value="1"/>
</dbReference>
<dbReference type="Gene3D" id="3.30.420.40">
    <property type="match status" value="2"/>
</dbReference>
<dbReference type="Gene3D" id="3.90.640.10">
    <property type="entry name" value="Actin, Chain A, domain 4"/>
    <property type="match status" value="1"/>
</dbReference>
<dbReference type="InterPro" id="IPR004000">
    <property type="entry name" value="Actin"/>
</dbReference>
<dbReference type="InterPro" id="IPR020902">
    <property type="entry name" value="Actin/actin-like_CS"/>
</dbReference>
<dbReference type="InterPro" id="IPR004001">
    <property type="entry name" value="Actin_CS"/>
</dbReference>
<dbReference type="InterPro" id="IPR043129">
    <property type="entry name" value="ATPase_NBD"/>
</dbReference>
<dbReference type="PANTHER" id="PTHR11937">
    <property type="entry name" value="ACTIN"/>
    <property type="match status" value="1"/>
</dbReference>
<dbReference type="Pfam" id="PF00022">
    <property type="entry name" value="Actin"/>
    <property type="match status" value="1"/>
</dbReference>
<dbReference type="PRINTS" id="PR00190">
    <property type="entry name" value="ACTIN"/>
</dbReference>
<dbReference type="SMART" id="SM00268">
    <property type="entry name" value="ACTIN"/>
    <property type="match status" value="1"/>
</dbReference>
<dbReference type="SUPFAM" id="SSF53067">
    <property type="entry name" value="Actin-like ATPase domain"/>
    <property type="match status" value="2"/>
</dbReference>
<dbReference type="PROSITE" id="PS00406">
    <property type="entry name" value="ACTINS_1"/>
    <property type="match status" value="1"/>
</dbReference>
<dbReference type="PROSITE" id="PS00432">
    <property type="entry name" value="ACTINS_2"/>
    <property type="match status" value="1"/>
</dbReference>
<dbReference type="PROSITE" id="PS01132">
    <property type="entry name" value="ACTINS_ACT_LIKE"/>
    <property type="match status" value="1"/>
</dbReference>
<organism>
    <name type="scientific">Pisaster ochraceus</name>
    <name type="common">Ochre sea star</name>
    <name type="synonym">Asterias ochracea</name>
    <dbReference type="NCBI Taxonomy" id="7612"/>
    <lineage>
        <taxon>Eukaryota</taxon>
        <taxon>Metazoa</taxon>
        <taxon>Echinodermata</taxon>
        <taxon>Eleutherozoa</taxon>
        <taxon>Asterozoa</taxon>
        <taxon>Asteroidea</taxon>
        <taxon>Forcipulatacea</taxon>
        <taxon>Forcipulatida</taxon>
        <taxon>Asteriidae</taxon>
        <taxon>Pisaster</taxon>
    </lineage>
</organism>
<evidence type="ECO:0000250" key="1"/>
<evidence type="ECO:0000250" key="2">
    <source>
        <dbReference type="UniProtKB" id="P68137"/>
    </source>
</evidence>
<evidence type="ECO:0000305" key="3"/>
<sequence length="376" mass="41952">MCDEDVAALVVDNGSGMCKAGFAGDDAPRAVFPSIVGRPRHQGVMVGMGQKDSYVGDEAQSKRGILTLKYPIEHGIVTNWDDMEKIWHHTFYNELRVAPEEHPVLLTEAPLNPKANREKMTQIMFETFNSPAMYVAIQAVLSLYASGRTTGIVFDTGDGVSHTVPIYEGYALPHAILRLDLAGRDLTDYLMKILTERGYSFTTTAEREIVRDIKEKLCYTALDFEQEMQTASSSSSLEKSYELPDGQVITIGNERFRCPETLFQPAFIGMESAGIHETTYNSIMKCDIDIRKDLYANTVLSGGTSMYPGIADRMQKEIQALAPPTMKIKIIAPPERKYSVWIGGSILASLSTFQQMWISKQEYDESGPSIVHRKCF</sequence>
<accession>P12717</accession>
<proteinExistence type="inferred from homology"/>
<feature type="propeptide" id="PRO_0000000710" description="Removed in mature form" evidence="1">
    <location>
        <begin position="1"/>
        <end position="2"/>
    </location>
</feature>
<feature type="chain" id="PRO_0000000711" description="Actin, muscle">
    <location>
        <begin position="3"/>
        <end position="376"/>
    </location>
</feature>
<feature type="modified residue" description="N-acetylaspartate" evidence="1">
    <location>
        <position position="3"/>
    </location>
</feature>
<comment type="function">
    <text>Actins are highly conserved proteins that are involved in various types of cell motility and are ubiquitously expressed in all eukaryotic cells.</text>
</comment>
<comment type="catalytic activity">
    <reaction evidence="2">
        <text>ATP + H2O = ADP + phosphate + H(+)</text>
        <dbReference type="Rhea" id="RHEA:13065"/>
        <dbReference type="ChEBI" id="CHEBI:15377"/>
        <dbReference type="ChEBI" id="CHEBI:15378"/>
        <dbReference type="ChEBI" id="CHEBI:30616"/>
        <dbReference type="ChEBI" id="CHEBI:43474"/>
        <dbReference type="ChEBI" id="CHEBI:456216"/>
    </reaction>
</comment>
<comment type="subcellular location">
    <subcellularLocation>
        <location>Cytoplasm</location>
        <location>Cytoskeleton</location>
    </subcellularLocation>
</comment>
<comment type="similarity">
    <text evidence="3">Belongs to the actin family.</text>
</comment>
<protein>
    <recommendedName>
        <fullName>Actin, muscle</fullName>
        <ecNumber evidence="2">3.6.4.-</ecNumber>
    </recommendedName>
</protein>
<name>ACTM_PISOC</name>